<organism>
    <name type="scientific">Desulforamulus reducens (strain ATCC BAA-1160 / DSM 100696 / MI-1)</name>
    <name type="common">Desulfotomaculum reducens</name>
    <dbReference type="NCBI Taxonomy" id="349161"/>
    <lineage>
        <taxon>Bacteria</taxon>
        <taxon>Bacillati</taxon>
        <taxon>Bacillota</taxon>
        <taxon>Clostridia</taxon>
        <taxon>Eubacteriales</taxon>
        <taxon>Peptococcaceae</taxon>
        <taxon>Desulforamulus</taxon>
    </lineage>
</organism>
<sequence>MNFQELILTLNKFWAEQNCIIQQPYDIEKGAGTMNPATFLRALGPEPWRVAYVEPSRRPTDGRYGENPNRLQHYFQYQVILKPSPDDVIPVYLDSLRAIGIDPDKHDIRFVEDNWESPTLGAWGLGWEVWLDGMEVTQFTYFQQCGGIDCHPVSAEITYGLERLAMFIQQKDSVYDITWVGDITYGDVYHQNEVEQSGYNFEVANTEMLFDLFDMYEAEANHILEKGLVLPAYDYVLKCSHTFNLLDARGAISVSERQGFIARVRQMARACAHAYVEQREKLGFPLLKKGGNING</sequence>
<dbReference type="EC" id="6.1.1.14" evidence="1"/>
<dbReference type="EMBL" id="CP000612">
    <property type="protein sequence ID" value="ABO50983.1"/>
    <property type="molecule type" value="Genomic_DNA"/>
</dbReference>
<dbReference type="RefSeq" id="WP_011878781.1">
    <property type="nucleotide sequence ID" value="NC_009253.1"/>
</dbReference>
<dbReference type="SMR" id="A4J7D0"/>
<dbReference type="STRING" id="349161.Dred_2473"/>
<dbReference type="KEGG" id="drm:Dred_2473"/>
<dbReference type="eggNOG" id="COG0752">
    <property type="taxonomic scope" value="Bacteria"/>
</dbReference>
<dbReference type="HOGENOM" id="CLU_057066_1_0_9"/>
<dbReference type="OrthoDB" id="9802183at2"/>
<dbReference type="Proteomes" id="UP000001556">
    <property type="component" value="Chromosome"/>
</dbReference>
<dbReference type="GO" id="GO:0005829">
    <property type="term" value="C:cytosol"/>
    <property type="evidence" value="ECO:0007669"/>
    <property type="project" value="TreeGrafter"/>
</dbReference>
<dbReference type="GO" id="GO:0005524">
    <property type="term" value="F:ATP binding"/>
    <property type="evidence" value="ECO:0007669"/>
    <property type="project" value="UniProtKB-UniRule"/>
</dbReference>
<dbReference type="GO" id="GO:0140096">
    <property type="term" value="F:catalytic activity, acting on a protein"/>
    <property type="evidence" value="ECO:0007669"/>
    <property type="project" value="UniProtKB-ARBA"/>
</dbReference>
<dbReference type="GO" id="GO:0004820">
    <property type="term" value="F:glycine-tRNA ligase activity"/>
    <property type="evidence" value="ECO:0007669"/>
    <property type="project" value="UniProtKB-UniRule"/>
</dbReference>
<dbReference type="GO" id="GO:0016740">
    <property type="term" value="F:transferase activity"/>
    <property type="evidence" value="ECO:0007669"/>
    <property type="project" value="UniProtKB-ARBA"/>
</dbReference>
<dbReference type="GO" id="GO:0006426">
    <property type="term" value="P:glycyl-tRNA aminoacylation"/>
    <property type="evidence" value="ECO:0007669"/>
    <property type="project" value="UniProtKB-UniRule"/>
</dbReference>
<dbReference type="CDD" id="cd00733">
    <property type="entry name" value="GlyRS_alpha_core"/>
    <property type="match status" value="1"/>
</dbReference>
<dbReference type="FunFam" id="3.30.930.10:FF:000006">
    <property type="entry name" value="Glycine--tRNA ligase alpha subunit"/>
    <property type="match status" value="1"/>
</dbReference>
<dbReference type="Gene3D" id="3.30.930.10">
    <property type="entry name" value="Bira Bifunctional Protein, Domain 2"/>
    <property type="match status" value="1"/>
</dbReference>
<dbReference type="Gene3D" id="1.20.58.180">
    <property type="entry name" value="Class II aaRS and biotin synthetases, domain 2"/>
    <property type="match status" value="1"/>
</dbReference>
<dbReference type="HAMAP" id="MF_00254">
    <property type="entry name" value="Gly_tRNA_synth_alpha"/>
    <property type="match status" value="1"/>
</dbReference>
<dbReference type="InterPro" id="IPR045864">
    <property type="entry name" value="aa-tRNA-synth_II/BPL/LPL"/>
</dbReference>
<dbReference type="InterPro" id="IPR006194">
    <property type="entry name" value="Gly-tRNA-synth_heterodimer"/>
</dbReference>
<dbReference type="InterPro" id="IPR002310">
    <property type="entry name" value="Gly-tRNA_ligase_asu"/>
</dbReference>
<dbReference type="NCBIfam" id="TIGR00388">
    <property type="entry name" value="glyQ"/>
    <property type="match status" value="1"/>
</dbReference>
<dbReference type="NCBIfam" id="NF006827">
    <property type="entry name" value="PRK09348.1"/>
    <property type="match status" value="1"/>
</dbReference>
<dbReference type="PANTHER" id="PTHR30075:SF2">
    <property type="entry name" value="GLYCINE--TRNA LIGASE, CHLOROPLASTIC_MITOCHONDRIAL 2"/>
    <property type="match status" value="1"/>
</dbReference>
<dbReference type="PANTHER" id="PTHR30075">
    <property type="entry name" value="GLYCYL-TRNA SYNTHETASE"/>
    <property type="match status" value="1"/>
</dbReference>
<dbReference type="Pfam" id="PF02091">
    <property type="entry name" value="tRNA-synt_2e"/>
    <property type="match status" value="1"/>
</dbReference>
<dbReference type="PRINTS" id="PR01044">
    <property type="entry name" value="TRNASYNTHGA"/>
</dbReference>
<dbReference type="SUPFAM" id="SSF55681">
    <property type="entry name" value="Class II aaRS and biotin synthetases"/>
    <property type="match status" value="1"/>
</dbReference>
<dbReference type="PROSITE" id="PS50861">
    <property type="entry name" value="AA_TRNA_LIGASE_II_GLYAB"/>
    <property type="match status" value="1"/>
</dbReference>
<keyword id="KW-0030">Aminoacyl-tRNA synthetase</keyword>
<keyword id="KW-0067">ATP-binding</keyword>
<keyword id="KW-0963">Cytoplasm</keyword>
<keyword id="KW-0436">Ligase</keyword>
<keyword id="KW-0547">Nucleotide-binding</keyword>
<keyword id="KW-0648">Protein biosynthesis</keyword>
<keyword id="KW-1185">Reference proteome</keyword>
<comment type="catalytic activity">
    <reaction evidence="1">
        <text>tRNA(Gly) + glycine + ATP = glycyl-tRNA(Gly) + AMP + diphosphate</text>
        <dbReference type="Rhea" id="RHEA:16013"/>
        <dbReference type="Rhea" id="RHEA-COMP:9664"/>
        <dbReference type="Rhea" id="RHEA-COMP:9683"/>
        <dbReference type="ChEBI" id="CHEBI:30616"/>
        <dbReference type="ChEBI" id="CHEBI:33019"/>
        <dbReference type="ChEBI" id="CHEBI:57305"/>
        <dbReference type="ChEBI" id="CHEBI:78442"/>
        <dbReference type="ChEBI" id="CHEBI:78522"/>
        <dbReference type="ChEBI" id="CHEBI:456215"/>
        <dbReference type="EC" id="6.1.1.14"/>
    </reaction>
</comment>
<comment type="subunit">
    <text evidence="1">Tetramer of two alpha and two beta subunits.</text>
</comment>
<comment type="subcellular location">
    <subcellularLocation>
        <location evidence="1">Cytoplasm</location>
    </subcellularLocation>
</comment>
<comment type="similarity">
    <text evidence="1">Belongs to the class-II aminoacyl-tRNA synthetase family.</text>
</comment>
<feature type="chain" id="PRO_1000071876" description="Glycine--tRNA ligase alpha subunit">
    <location>
        <begin position="1"/>
        <end position="295"/>
    </location>
</feature>
<evidence type="ECO:0000255" key="1">
    <source>
        <dbReference type="HAMAP-Rule" id="MF_00254"/>
    </source>
</evidence>
<reference key="1">
    <citation type="submission" date="2007-03" db="EMBL/GenBank/DDBJ databases">
        <title>Complete sequence of Desulfotomaculum reducens MI-1.</title>
        <authorList>
            <consortium name="US DOE Joint Genome Institute"/>
            <person name="Copeland A."/>
            <person name="Lucas S."/>
            <person name="Lapidus A."/>
            <person name="Barry K."/>
            <person name="Detter J.C."/>
            <person name="Glavina del Rio T."/>
            <person name="Hammon N."/>
            <person name="Israni S."/>
            <person name="Dalin E."/>
            <person name="Tice H."/>
            <person name="Pitluck S."/>
            <person name="Sims D."/>
            <person name="Brettin T."/>
            <person name="Bruce D."/>
            <person name="Han C."/>
            <person name="Tapia R."/>
            <person name="Schmutz J."/>
            <person name="Larimer F."/>
            <person name="Land M."/>
            <person name="Hauser L."/>
            <person name="Kyrpides N."/>
            <person name="Kim E."/>
            <person name="Tebo B.M."/>
            <person name="Richardson P."/>
        </authorList>
    </citation>
    <scope>NUCLEOTIDE SEQUENCE [LARGE SCALE GENOMIC DNA]</scope>
    <source>
        <strain>ATCC BAA-1160 / DSM 100696 / MI-1</strain>
    </source>
</reference>
<gene>
    <name evidence="1" type="primary">glyQ</name>
    <name type="ordered locus">Dred_2473</name>
</gene>
<proteinExistence type="inferred from homology"/>
<accession>A4J7D0</accession>
<protein>
    <recommendedName>
        <fullName evidence="1">Glycine--tRNA ligase alpha subunit</fullName>
        <ecNumber evidence="1">6.1.1.14</ecNumber>
    </recommendedName>
    <alternativeName>
        <fullName evidence="1">Glycyl-tRNA synthetase alpha subunit</fullName>
        <shortName evidence="1">GlyRS</shortName>
    </alternativeName>
</protein>
<name>SYGA_DESRM</name>